<reference evidence="8" key="1">
    <citation type="submission" date="2019-06" db="EMBL/GenBank/DDBJ databases">
        <title>Protein identified by two-dimensional electrophoresis in Chattonella marina var. antiqua.</title>
        <authorList>
            <person name="Mukai K."/>
            <person name="Qiu X."/>
            <person name="Shimasaki Y."/>
            <person name="Oshima Y."/>
        </authorList>
    </citation>
    <scope>NUCLEOTIDE SEQUENCE [GENOMIC DNA]</scope>
    <source>
        <strain evidence="8">NIES-1</strain>
    </source>
</reference>
<reference evidence="7" key="2">
    <citation type="journal article" date="2013" name="Biosci. Biotechnol. Biochem.">
        <title>Growth-phase dependent variation in photosynthetic activity and cellular protein expression profile in the harmful raphidophyte Chattonella antiqua.</title>
        <authorList>
            <person name="Qiu X."/>
            <person name="Shimasaki Y."/>
            <person name="Tsuyama M."/>
            <person name="Yamada T."/>
            <person name="Kuwahara R."/>
            <person name="Kawaguchi M."/>
            <person name="Honda M."/>
            <person name="Gunjikake H."/>
            <person name="Tasmin R."/>
            <person name="Shimizu M."/>
            <person name="Sato Y."/>
            <person name="Kato-Unoki Y."/>
            <person name="Nakashima T."/>
            <person name="Matsubara T."/>
            <person name="Yamasaki Y."/>
            <person name="Ichinose H."/>
            <person name="Wariishi H."/>
            <person name="Honjo T."/>
            <person name="Oshima Y."/>
        </authorList>
    </citation>
    <scope>PROTEIN SEQUENCE OF 65-84</scope>
    <scope>INDUCTION</scope>
    <source>
        <strain evidence="5">NIES-1</strain>
    </source>
</reference>
<reference evidence="7" key="3">
    <citation type="journal article" date="2020" name="J. Exp. Mar. Biol. Ecol.">
        <title>Diurnal variations in expression of photosynthesis-related proteins in the harmful Raphidophyceae Chattonella marina var. antiqua.</title>
        <authorList>
            <person name="Qiu X."/>
            <person name="Mukai K."/>
            <person name="Shimasaki Y."/>
            <person name="Wu M."/>
            <person name="Chen C."/>
            <person name="Lu Y."/>
            <person name="Ichinose H."/>
            <person name="Nakashima T."/>
            <person name="Kato-Unoki Y."/>
            <person name="Oshima Y."/>
        </authorList>
    </citation>
    <scope>PROTEIN SEQUENCE OF 65-84</scope>
    <scope>INDUCTION</scope>
    <source>
        <strain evidence="6">NIES-1</strain>
    </source>
</reference>
<feature type="signal peptide" evidence="2">
    <location>
        <begin position="1"/>
        <end position="18"/>
    </location>
</feature>
<feature type="chain" id="PRO_5021476367" description="Oxygen-evolving enhancer protein 1, chloroplastic" evidence="2">
    <location>
        <begin position="19"/>
        <end position="318"/>
    </location>
</feature>
<feature type="transmembrane region" description="Helical" evidence="2">
    <location>
        <begin position="45"/>
        <end position="65"/>
    </location>
</feature>
<feature type="sequence conflict" description="In Ref. 2; AA sequence and 3; AA sequence." evidence="7" ref="2 3">
    <original>T</original>
    <variation>V</variation>
    <location>
        <position position="81"/>
    </location>
</feature>
<comment type="function">
    <text evidence="1">Stabilizes the manganese cluster which is the primary site of water splitting.</text>
</comment>
<comment type="subcellular location">
    <subcellularLocation>
        <location evidence="1">Plastid</location>
        <location evidence="1">Chloroplast thylakoid membrane</location>
        <topology evidence="2">Single-pass membrane protein</topology>
    </subcellularLocation>
    <text evidence="1">Associated with the photosystem II complex.</text>
</comment>
<comment type="induction">
    <text evidence="3 4">Expression shows a diurnal pattern of oscillation across the 24-hour light-dark, with increased levels during the light period (at protein level) (Ref.3). Down-regulated in the late stationary growth phase as compared to the early stationary and exponential growth phases (PubMed:23291769).</text>
</comment>
<comment type="similarity">
    <text evidence="7">Belongs to the PsbO family.</text>
</comment>
<keyword id="KW-0150">Chloroplast</keyword>
<keyword id="KW-0903">Direct protein sequencing</keyword>
<keyword id="KW-0472">Membrane</keyword>
<keyword id="KW-0602">Photosynthesis</keyword>
<keyword id="KW-0604">Photosystem II</keyword>
<keyword id="KW-0934">Plastid</keyword>
<keyword id="KW-0732">Signal</keyword>
<keyword id="KW-0793">Thylakoid</keyword>
<keyword id="KW-0812">Transmembrane</keyword>
<keyword id="KW-1133">Transmembrane helix</keyword>
<evidence type="ECO:0000250" key="1">
    <source>
        <dbReference type="UniProtKB" id="P23321"/>
    </source>
</evidence>
<evidence type="ECO:0000255" key="2"/>
<evidence type="ECO:0000269" key="3">
    <source>
    </source>
</evidence>
<evidence type="ECO:0000269" key="4">
    <source ref="3"/>
</evidence>
<evidence type="ECO:0000303" key="5">
    <source>
    </source>
</evidence>
<evidence type="ECO:0000303" key="6">
    <source ref="3"/>
</evidence>
<evidence type="ECO:0000305" key="7"/>
<evidence type="ECO:0000312" key="8">
    <source>
        <dbReference type="EMBL" id="BBL54382.1"/>
    </source>
</evidence>
<name>PSBO_CHAMQ</name>
<dbReference type="EMBL" id="LC486728">
    <property type="protein sequence ID" value="BBL54382.1"/>
    <property type="molecule type" value="Genomic_DNA"/>
</dbReference>
<dbReference type="SMR" id="A0A4Y1YTM1"/>
<dbReference type="GO" id="GO:0009535">
    <property type="term" value="C:chloroplast thylakoid membrane"/>
    <property type="evidence" value="ECO:0007669"/>
    <property type="project" value="UniProtKB-SubCell"/>
</dbReference>
<dbReference type="GO" id="GO:0009523">
    <property type="term" value="C:photosystem II"/>
    <property type="evidence" value="ECO:0007669"/>
    <property type="project" value="UniProtKB-KW"/>
</dbReference>
<dbReference type="GO" id="GO:0010207">
    <property type="term" value="P:photosystem II assembly"/>
    <property type="evidence" value="ECO:0007669"/>
    <property type="project" value="InterPro"/>
</dbReference>
<dbReference type="GO" id="GO:0042549">
    <property type="term" value="P:photosystem II stabilization"/>
    <property type="evidence" value="ECO:0007669"/>
    <property type="project" value="InterPro"/>
</dbReference>
<dbReference type="Gene3D" id="3.30.2050.10">
    <property type="entry name" value="photosynthetic oxygen evolving center domain"/>
    <property type="match status" value="1"/>
</dbReference>
<dbReference type="Gene3D" id="2.40.160.30">
    <property type="entry name" value="Photosystem II, cytochrome c-550 precursor"/>
    <property type="match status" value="1"/>
</dbReference>
<dbReference type="InterPro" id="IPR011250">
    <property type="entry name" value="OMP/PagP_b-brl"/>
</dbReference>
<dbReference type="InterPro" id="IPR002628">
    <property type="entry name" value="PsbO"/>
</dbReference>
<dbReference type="PANTHER" id="PTHR34058">
    <property type="entry name" value="OXYGEN-EVOLVING ENHANCER PROTEIN 1-2, CHLOROPLASTIC"/>
    <property type="match status" value="1"/>
</dbReference>
<dbReference type="Pfam" id="PF01716">
    <property type="entry name" value="MSP"/>
    <property type="match status" value="1"/>
</dbReference>
<dbReference type="SUPFAM" id="SSF56925">
    <property type="entry name" value="OMPA-like"/>
    <property type="match status" value="1"/>
</dbReference>
<sequence length="318" mass="33928">MKAVIAVFITLMLTAVVAFQPAASFSAPKCAGKMSMAIEDAPKKAAAAALAALTTLSVISPSFAITKEELRSLDYLQVKGTGLANRCPEVKGTDSIKVKGAGQEIVDLCIEPKTFQVLEETRNKKGELSKEFINTKLMTRQTYTLDGISGDLNVVDGKIQFTELDGIDYAATTVQKPGGERVPFLFTVKELVAKASAGGNTIAPGFQMGGKFVVPSYRTGLFLDPKGRGATTGYDMAVALPGIQSGVEGDEELFRENNKVFDVLSGQIEFEVNRVNLEEGEIGGVFVSTQGSDTDMGSKSPETVLLKGIFYGRIADKE</sequence>
<protein>
    <recommendedName>
        <fullName evidence="7">Oxygen-evolving enhancer protein 1, chloroplastic</fullName>
        <shortName evidence="7">OEE1</shortName>
    </recommendedName>
</protein>
<accession>A0A4Y1YTM1</accession>
<accession>C0HLQ8</accession>
<proteinExistence type="evidence at protein level"/>
<organism>
    <name type="scientific">Chattonella marina var. antiqua</name>
    <name type="common">Red tide flagellate</name>
    <name type="synonym">Chattonella antiqua</name>
    <dbReference type="NCBI Taxonomy" id="859642"/>
    <lineage>
        <taxon>Eukaryota</taxon>
        <taxon>Sar</taxon>
        <taxon>Stramenopiles</taxon>
        <taxon>Ochrophyta</taxon>
        <taxon>Raphidophyceae</taxon>
        <taxon>Chattonellales</taxon>
        <taxon>Chattonellaceae</taxon>
        <taxon>Chattonella</taxon>
    </lineage>
</organism>